<keyword id="KW-1003">Cell membrane</keyword>
<keyword id="KW-1015">Disulfide bond</keyword>
<keyword id="KW-0297">G-protein coupled receptor</keyword>
<keyword id="KW-0325">Glycoprotein</keyword>
<keyword id="KW-0449">Lipoprotein</keyword>
<keyword id="KW-0472">Membrane</keyword>
<keyword id="KW-0564">Palmitate</keyword>
<keyword id="KW-0597">Phosphoprotein</keyword>
<keyword id="KW-0675">Receptor</keyword>
<keyword id="KW-0765">Sulfation</keyword>
<keyword id="KW-0807">Transducer</keyword>
<keyword id="KW-0812">Transmembrane</keyword>
<keyword id="KW-1133">Transmembrane helix</keyword>
<proteinExistence type="inferred from homology"/>
<protein>
    <recommendedName>
        <fullName>C-C chemokine receptor type 5</fullName>
        <shortName>C-C CKR-5</shortName>
        <shortName>CC-CKR-5</shortName>
        <shortName>CCR-5</shortName>
        <shortName>CCR5</shortName>
    </recommendedName>
    <cdAntigenName>CD195</cdAntigenName>
</protein>
<comment type="function">
    <text evidence="1">Receptor for a number of inflammatory CC-chemokines including CCL3/MIP-1-alpha, CCL4/MIP-1-beta and RANTES and subsequently transduces a signal by increasing the intracellular calcium ion level. May play a role in the control of granulocytic lineage proliferation or differentiation. Participates in T-lymphocyte migration to the infection site by acting as a chemotactic receptor.</text>
</comment>
<comment type="subunit">
    <text evidence="1">Interacts with PRAF2. Efficient ligand binding to CCL3/MIP-1alpha and CCL4/MIP-1beta requires sulfation, O-glycosylation and sialic acid modifications. Glycosylation on Ser-6 is required for efficient binding of CCL4. Interacts with GRK2. Interacts with ARRB1 and ARRB2. Interacts with CNIH4. Interacts with S100A4; this interaction stimulates T-lymphocyte chemotaxis.</text>
</comment>
<comment type="subcellular location">
    <subcellularLocation>
        <location evidence="2">Cell membrane</location>
        <topology evidence="2">Multi-pass membrane protein</topology>
    </subcellularLocation>
</comment>
<comment type="PTM">
    <text evidence="1">Sulfated on at least 2 of the N-terminal tyrosines. Sulfation is required for efficient binding of the chemokines, CCL3 and CCL4 (By similarity).</text>
</comment>
<comment type="PTM">
    <text evidence="1">Palmitoylation in the C-terminal is important for cell surface expression.</text>
</comment>
<comment type="PTM">
    <text evidence="1">Phosphorylation on serine residues in the C-terminal is stimulated by binding CC chemokines especially by APO-RANTES.</text>
</comment>
<comment type="PTM">
    <text evidence="1">O-glycosylated, but not N-glycosylated. Ser-6 appears to be the major site even if Ser-7 may be also O-glycosylated. Also sialylated glycans present which contribute to chemokine binding. Thr-16 and Ser-17 may also be glycosylated and, if so, with small moieties such as a T-antigen.</text>
</comment>
<comment type="similarity">
    <text evidence="4">Belongs to the G-protein coupled receptor 1 family.</text>
</comment>
<feature type="chain" id="PRO_0000254903" description="C-C chemokine receptor type 5">
    <location>
        <begin position="1"/>
        <end position="352"/>
    </location>
</feature>
<feature type="topological domain" description="Extracellular" evidence="3">
    <location>
        <begin position="1"/>
        <end position="30"/>
    </location>
</feature>
<feature type="transmembrane region" description="Helical; Name=1" evidence="3">
    <location>
        <begin position="31"/>
        <end position="58"/>
    </location>
</feature>
<feature type="topological domain" description="Cytoplasmic" evidence="3">
    <location>
        <begin position="59"/>
        <end position="68"/>
    </location>
</feature>
<feature type="transmembrane region" description="Helical; Name=2" evidence="3">
    <location>
        <begin position="69"/>
        <end position="89"/>
    </location>
</feature>
<feature type="topological domain" description="Extracellular" evidence="3">
    <location>
        <begin position="90"/>
        <end position="102"/>
    </location>
</feature>
<feature type="transmembrane region" description="Helical; Name=3" evidence="3">
    <location>
        <begin position="103"/>
        <end position="124"/>
    </location>
</feature>
<feature type="topological domain" description="Cytoplasmic" evidence="3">
    <location>
        <begin position="125"/>
        <end position="141"/>
    </location>
</feature>
<feature type="transmembrane region" description="Helical; Name=4" evidence="3">
    <location>
        <begin position="142"/>
        <end position="166"/>
    </location>
</feature>
<feature type="topological domain" description="Extracellular" evidence="3">
    <location>
        <begin position="167"/>
        <end position="198"/>
    </location>
</feature>
<feature type="transmembrane region" description="Helical; Name=5" evidence="3">
    <location>
        <begin position="199"/>
        <end position="218"/>
    </location>
</feature>
<feature type="topological domain" description="Cytoplasmic" evidence="3">
    <location>
        <begin position="219"/>
        <end position="235"/>
    </location>
</feature>
<feature type="transmembrane region" description="Helical; Name=6" evidence="3">
    <location>
        <begin position="236"/>
        <end position="260"/>
    </location>
</feature>
<feature type="topological domain" description="Extracellular" evidence="3">
    <location>
        <begin position="261"/>
        <end position="277"/>
    </location>
</feature>
<feature type="transmembrane region" description="Helical; Name=7" evidence="3">
    <location>
        <begin position="278"/>
        <end position="301"/>
    </location>
</feature>
<feature type="topological domain" description="Cytoplasmic" evidence="3">
    <location>
        <begin position="302"/>
        <end position="352"/>
    </location>
</feature>
<feature type="modified residue" description="Sulfotyrosine" evidence="1">
    <location>
        <position position="3"/>
    </location>
</feature>
<feature type="modified residue" description="Sulfotyrosine" evidence="3">
    <location>
        <position position="10"/>
    </location>
</feature>
<feature type="modified residue" description="Sulfotyrosine" evidence="3">
    <location>
        <position position="14"/>
    </location>
</feature>
<feature type="modified residue" description="Sulfotyrosine" evidence="3">
    <location>
        <position position="15"/>
    </location>
</feature>
<feature type="modified residue" description="Phosphoserine; by BARK1" evidence="1">
    <location>
        <position position="336"/>
    </location>
</feature>
<feature type="modified residue" description="Phosphoserine; by BARK1" evidence="1">
    <location>
        <position position="337"/>
    </location>
</feature>
<feature type="modified residue" description="Phosphoserine; by BARK1" evidence="1">
    <location>
        <position position="342"/>
    </location>
</feature>
<feature type="lipid moiety-binding region" description="S-palmitoyl cysteine" evidence="1">
    <location>
        <position position="321"/>
    </location>
</feature>
<feature type="lipid moiety-binding region" description="S-palmitoyl cysteine" evidence="1">
    <location>
        <position position="323"/>
    </location>
</feature>
<feature type="lipid moiety-binding region" description="S-palmitoyl cysteine" evidence="1">
    <location>
        <position position="324"/>
    </location>
</feature>
<feature type="glycosylation site" description="O-linked (GalNAc...) serine" evidence="1">
    <location>
        <position position="6"/>
    </location>
</feature>
<feature type="glycosylation site" description="O-linked (GalNAc...) serine" evidence="1">
    <location>
        <position position="7"/>
    </location>
</feature>
<feature type="disulfide bond" evidence="1">
    <location>
        <begin position="20"/>
        <end position="269"/>
    </location>
</feature>
<feature type="disulfide bond" evidence="4">
    <location>
        <begin position="101"/>
        <end position="178"/>
    </location>
</feature>
<organism>
    <name type="scientific">Allochrocebus solatus</name>
    <name type="common">Sun-tailed monkey</name>
    <name type="synonym">Cercopithecus solatus</name>
    <dbReference type="NCBI Taxonomy" id="147650"/>
    <lineage>
        <taxon>Eukaryota</taxon>
        <taxon>Metazoa</taxon>
        <taxon>Chordata</taxon>
        <taxon>Craniata</taxon>
        <taxon>Vertebrata</taxon>
        <taxon>Euteleostomi</taxon>
        <taxon>Mammalia</taxon>
        <taxon>Eutheria</taxon>
        <taxon>Euarchontoglires</taxon>
        <taxon>Primates</taxon>
        <taxon>Haplorrhini</taxon>
        <taxon>Catarrhini</taxon>
        <taxon>Cercopithecidae</taxon>
        <taxon>Cercopithecinae</taxon>
        <taxon>Allochrocebus</taxon>
    </lineage>
</organism>
<accession>Q9BGN6</accession>
<gene>
    <name type="primary">CCR5</name>
    <name type="synonym">CMKBR5</name>
</gene>
<sequence length="352" mass="40333">MVYQVSSPTYDIDYYTSEPCQKINVKQIAARLLPPLYSLVFIFGFVGNILVVLILINCKRLKSMTDIYLLNLAISDLLFLLTIPFWAHYAAAQWDFGNTMCQLLTGLYLIGFFSGIFFIILLTIDRYLAIVHAVFALKARTVTFGLVTSVITWVVAVFASLPGIIFTRSQREGLHYTCSSHFPSSQYQFWKNFQTLKIVILGLVLPLLVMVICYSGILKTLLRCRNEKKRHRAVRLIFTIMIVYFLFWAPYNIVLLLNTFQEFFGLNNCSSSNRLDQAMQVTETLGMTHCCINPIIYAFVGEKFRNYLLVFFQKHLAKRFCKCCSISQQEAPERASSVYTRSTGEQETTVGL</sequence>
<reference key="1">
    <citation type="submission" date="1999-12" db="EMBL/GenBank/DDBJ databases">
        <title>Phylogeny and cross-species transmission of simian and human immunodeficiency viruses.</title>
        <authorList>
            <person name="Beer B.E."/>
            <person name="Kuiken C.L."/>
            <person name="Bailes E."/>
            <person name="Korber B."/>
            <person name="Sharp P.M."/>
            <person name="Hirsch V.M."/>
        </authorList>
    </citation>
    <scope>NUCLEOTIDE SEQUENCE [GENOMIC DNA]</scope>
</reference>
<evidence type="ECO:0000250" key="1">
    <source>
        <dbReference type="UniProtKB" id="P51681"/>
    </source>
</evidence>
<evidence type="ECO:0000250" key="2">
    <source>
        <dbReference type="UniProtKB" id="Q9XT76"/>
    </source>
</evidence>
<evidence type="ECO:0000255" key="3"/>
<evidence type="ECO:0000255" key="4">
    <source>
        <dbReference type="PROSITE-ProRule" id="PRU00521"/>
    </source>
</evidence>
<dbReference type="EMBL" id="AF212100">
    <property type="protein sequence ID" value="AAG53465.1"/>
    <property type="molecule type" value="Genomic_DNA"/>
</dbReference>
<dbReference type="SMR" id="Q9BGN6"/>
<dbReference type="GlyCosmos" id="Q9BGN6">
    <property type="glycosylation" value="2 sites, No reported glycans"/>
</dbReference>
<dbReference type="GO" id="GO:0005737">
    <property type="term" value="C:cytoplasm"/>
    <property type="evidence" value="ECO:0007669"/>
    <property type="project" value="TreeGrafter"/>
</dbReference>
<dbReference type="GO" id="GO:0009897">
    <property type="term" value="C:external side of plasma membrane"/>
    <property type="evidence" value="ECO:0000250"/>
    <property type="project" value="UniProtKB"/>
</dbReference>
<dbReference type="GO" id="GO:0016493">
    <property type="term" value="F:C-C chemokine receptor activity"/>
    <property type="evidence" value="ECO:0000250"/>
    <property type="project" value="UniProtKB"/>
</dbReference>
<dbReference type="GO" id="GO:0071791">
    <property type="term" value="F:chemokine (C-C motif) ligand 5 binding"/>
    <property type="evidence" value="ECO:0007669"/>
    <property type="project" value="TreeGrafter"/>
</dbReference>
<dbReference type="GO" id="GO:0019722">
    <property type="term" value="P:calcium-mediated signaling"/>
    <property type="evidence" value="ECO:0007669"/>
    <property type="project" value="TreeGrafter"/>
</dbReference>
<dbReference type="GO" id="GO:0060326">
    <property type="term" value="P:cell chemotaxis"/>
    <property type="evidence" value="ECO:0007669"/>
    <property type="project" value="TreeGrafter"/>
</dbReference>
<dbReference type="GO" id="GO:0006955">
    <property type="term" value="P:immune response"/>
    <property type="evidence" value="ECO:0007669"/>
    <property type="project" value="InterPro"/>
</dbReference>
<dbReference type="GO" id="GO:0006954">
    <property type="term" value="P:inflammatory response"/>
    <property type="evidence" value="ECO:0007669"/>
    <property type="project" value="InterPro"/>
</dbReference>
<dbReference type="GO" id="GO:0007204">
    <property type="term" value="P:positive regulation of cytosolic calcium ion concentration"/>
    <property type="evidence" value="ECO:0007669"/>
    <property type="project" value="TreeGrafter"/>
</dbReference>
<dbReference type="CDD" id="cd15184">
    <property type="entry name" value="7tmA_CCR5_CCR2"/>
    <property type="match status" value="1"/>
</dbReference>
<dbReference type="FunFam" id="1.20.1070.10:FF:000026">
    <property type="entry name" value="C-C chemokine receptor type 5"/>
    <property type="match status" value="1"/>
</dbReference>
<dbReference type="Gene3D" id="1.20.1070.10">
    <property type="entry name" value="Rhodopsin 7-helix transmembrane proteins"/>
    <property type="match status" value="1"/>
</dbReference>
<dbReference type="InterPro" id="IPR050119">
    <property type="entry name" value="CCR1-9-like"/>
</dbReference>
<dbReference type="InterPro" id="IPR002240">
    <property type="entry name" value="Chemokine_CCR5"/>
</dbReference>
<dbReference type="InterPro" id="IPR000355">
    <property type="entry name" value="Chemokine_rcpt"/>
</dbReference>
<dbReference type="InterPro" id="IPR000276">
    <property type="entry name" value="GPCR_Rhodpsn"/>
</dbReference>
<dbReference type="InterPro" id="IPR017452">
    <property type="entry name" value="GPCR_Rhodpsn_7TM"/>
</dbReference>
<dbReference type="PANTHER" id="PTHR10489:SF686">
    <property type="entry name" value="C-C CHEMOKINE RECEPTOR TYPE 5"/>
    <property type="match status" value="1"/>
</dbReference>
<dbReference type="PANTHER" id="PTHR10489">
    <property type="entry name" value="CELL ADHESION MOLECULE"/>
    <property type="match status" value="1"/>
</dbReference>
<dbReference type="Pfam" id="PF00001">
    <property type="entry name" value="7tm_1"/>
    <property type="match status" value="1"/>
</dbReference>
<dbReference type="PRINTS" id="PR00657">
    <property type="entry name" value="CCCHEMOKINER"/>
</dbReference>
<dbReference type="PRINTS" id="PR01110">
    <property type="entry name" value="CHEMOKINER5"/>
</dbReference>
<dbReference type="PRINTS" id="PR00237">
    <property type="entry name" value="GPCRRHODOPSN"/>
</dbReference>
<dbReference type="SUPFAM" id="SSF81321">
    <property type="entry name" value="Family A G protein-coupled receptor-like"/>
    <property type="match status" value="1"/>
</dbReference>
<dbReference type="PROSITE" id="PS00237">
    <property type="entry name" value="G_PROTEIN_RECEP_F1_1"/>
    <property type="match status" value="1"/>
</dbReference>
<dbReference type="PROSITE" id="PS50262">
    <property type="entry name" value="G_PROTEIN_RECEP_F1_2"/>
    <property type="match status" value="1"/>
</dbReference>
<name>CCR5_ALLSO</name>